<dbReference type="EMBL" id="LC646903">
    <property type="protein sequence ID" value="BDA39142.1"/>
    <property type="molecule type" value="Genomic_DNA"/>
</dbReference>
<gene>
    <name evidence="2" type="primary">phomA</name>
</gene>
<accession>A0A8J9SEV3</accession>
<keyword id="KW-0677">Repeat</keyword>
<keyword id="KW-0732">Signal</keyword>
<keyword id="KW-0843">Virulence</keyword>
<evidence type="ECO:0000269" key="1">
    <source>
    </source>
</evidence>
<evidence type="ECO:0000303" key="2">
    <source>
    </source>
</evidence>
<evidence type="ECO:0000305" key="3">
    <source>
    </source>
</evidence>
<sequence length="172" mass="19188">MRFTPAIVIAAFCSLAVAAPAAKAIARSPSEAVEDYVIPIDKKRGEAVEDYVIPIDKKRGEAVEDYVIPIDKRGEAVEDYVIPIDKRGEAVEDYVIPIDKKRGEAVEDYVIPIDKRGEAVEDYVIPIDRKRGEAVEDYVIPIDKRGEAVEDYVIPIDKRGEAVEDYVIPIDK</sequence>
<proteinExistence type="predicted"/>
<comment type="function">
    <text evidence="1">Ribosomally synthesized cyclic peptide phomopsin precursor; part of the gene cluster that mediates the biosynthesis of the phomopsins, a group of hexapeptide mycotoxins which infects lupins and causes lupinosis disease in livestock (PubMed:34608734). The phomA translated product contains a 10-fold repeated peptide embedding the hexapeptide Tyr-Val-Ile-Pro-Ile-Asp, that is converted into phomapsins (PubMed:34608734). After being excised from the precursor peptide by kexin proteases, the core peptides are cyclized and modified post-translationally by enzymes encoded within the corresponding gene cluster (PubMed:34608734).</text>
</comment>
<comment type="pathway">
    <text evidence="1">Mycotoxin biosynthesis.</text>
</comment>
<comment type="PTM">
    <text evidence="1 3">PhomA is processed by several endopeptidases including kexin proteases as well as the cluster-specific S41 family peptidase phomP1 and the oligopeptidase phomG to produce 10 identical copies of the hexapeptide Tyr-Val-Ile-Pro-Ile-Asp, that is further modified to yield phomapsins (Probable). The timing and order of proteolysis of the phomA precursor and PTMs are still unknown. Two tyrosinase-like enzymes, phomQ1 and phomQ2, catalyze the chlorination and hydroxylation of Tyr, respectively. PhomYb, is proposed to be involved in the construction of the macrocyclic structure. The other 4 ustYa family proteins may be involved in PTMs that generate the unique structure of phomopsin A. PhomYa is required for the hydroxylation of C-beta of Tyr. PhomYc, phomYd, and phomYe are responsible for the biosynthesis of 2,3-dehydroisoleucine (dIle), 2,3-dehydroaspartic acid (dAsp), and 3,4-dehydroproline (dPro), respectively. While dIle formation by phomYc is indispensable for the installation of dAsp by phomYd, the order of the other PTMs have not been elucidated yet. Most of the biosynthetic enzymes likely have broad substrate specificity, and thus, there might be a metabolic grid from a precursor to phomopsin A. The enzyme(s) responsible for the biosynthesis of 3,4-dehydrovaline (dVal) have also not been identified yet. Finally, phomM acts as an S-adenosylmethionine-dependent alpha-N-methyltransferase that catalyzes two successive N-methylation reactions, converting N-desmethyl-phomopsin A to phomopsin A and phomopsin A further to an N,N-dimethylated congener called phomopsin E (PubMed:34608734).</text>
</comment>
<comment type="disruption phenotype">
    <text evidence="1">Abolished the production of phomopsin A and does not result in the accumulation of any related metabolites.</text>
</comment>
<feature type="signal peptide" evidence="3">
    <location>
        <begin position="1"/>
        <end position="18"/>
    </location>
</feature>
<feature type="propeptide" id="PRO_0000458292" evidence="3">
    <location>
        <begin position="19"/>
        <end position="35"/>
    </location>
</feature>
<feature type="peptide" id="PRO_5035476128" description="YVIPID-I" evidence="3">
    <location>
        <begin position="36"/>
        <end position="41"/>
    </location>
</feature>
<feature type="propeptide" id="PRO_0000458293" evidence="3">
    <location>
        <begin position="42"/>
        <end position="50"/>
    </location>
</feature>
<feature type="peptide" id="PRO_0000458294" description="YVIPID-II" evidence="3">
    <location>
        <begin position="51"/>
        <end position="56"/>
    </location>
</feature>
<feature type="propeptide" id="PRO_0000458295" evidence="3">
    <location>
        <begin position="57"/>
        <end position="65"/>
    </location>
</feature>
<feature type="peptide" id="PRO_0000458296" description="YVIPID-III" evidence="3">
    <location>
        <begin position="66"/>
        <end position="71"/>
    </location>
</feature>
<feature type="propeptide" id="PRO_0000458297" evidence="3">
    <location>
        <begin position="72"/>
        <end position="79"/>
    </location>
</feature>
<feature type="peptide" id="PRO_0000458298" description="YVIPID-IV" evidence="3">
    <location>
        <begin position="80"/>
        <end position="85"/>
    </location>
</feature>
<feature type="propeptide" id="PRO_0000458299" evidence="3">
    <location>
        <begin position="86"/>
        <end position="93"/>
    </location>
</feature>
<feature type="peptide" id="PRO_0000458300" description="YVIPID-V" evidence="3">
    <location>
        <begin position="94"/>
        <end position="99"/>
    </location>
</feature>
<feature type="propeptide" id="PRO_0000458301" evidence="3">
    <location>
        <begin position="100"/>
        <end position="108"/>
    </location>
</feature>
<feature type="peptide" id="PRO_0000458302" description="YVIPID-VI" evidence="3">
    <location>
        <begin position="109"/>
        <end position="114"/>
    </location>
</feature>
<feature type="propeptide" id="PRO_0000458303" evidence="3">
    <location>
        <begin position="115"/>
        <end position="122"/>
    </location>
</feature>
<feature type="peptide" id="PRO_0000458304" description="YVIPID-VII" evidence="3">
    <location>
        <begin position="123"/>
        <end position="128"/>
    </location>
</feature>
<feature type="propeptide" id="PRO_0000458305" evidence="3">
    <location>
        <begin position="129"/>
        <end position="137"/>
    </location>
</feature>
<feature type="peptide" id="PRO_0000458306" description="YVIPID-VIII" evidence="3">
    <location>
        <begin position="138"/>
        <end position="143"/>
    </location>
</feature>
<feature type="propeptide" id="PRO_0000458307" evidence="3">
    <location>
        <begin position="144"/>
        <end position="151"/>
    </location>
</feature>
<feature type="peptide" id="PRO_0000458308" description="YVIPID-IX" evidence="3">
    <location>
        <begin position="152"/>
        <end position="157"/>
    </location>
</feature>
<feature type="propeptide" id="PRO_0000458309" evidence="3">
    <location>
        <begin position="158"/>
        <end position="165"/>
    </location>
</feature>
<feature type="peptide" id="PRO_0000458310" description="YVIPID-X" evidence="3">
    <location>
        <begin position="166"/>
        <end position="171"/>
    </location>
</feature>
<feature type="propeptide" id="PRO_0000458311" evidence="3">
    <location>
        <position position="172"/>
    </location>
</feature>
<reference key="1">
    <citation type="journal article" date="2021" name="Angew. Chem. Int. Ed.">
        <title>Biosynthetic studies of phomopsins unveil posttranslational installation of dehydroamino acids by ustYa family proteins.</title>
        <authorList>
            <person name="Sogahata K."/>
            <person name="Ozaki T."/>
            <person name="Igarashi Y."/>
            <person name="Naganuma Y."/>
            <person name="Liu C."/>
            <person name="Minami A."/>
            <person name="Oikawa H."/>
        </authorList>
    </citation>
    <scope>NUCLEOTIDE SEQUENCE [GENOMIC DNA]</scope>
    <scope>FUNCTION</scope>
    <scope>DISRUPTION PHENOTYPE</scope>
    <scope>POST-TRANSLATIONAL MODIFICATIONS TO YIELD PHOMOPSINS</scope>
    <scope>PATHWAY</scope>
    <source>
        <strain>ATCC 26115 / IMI 115107 / C 1557</strain>
    </source>
</reference>
<name>PHOA1_DIALO</name>
<organism>
    <name type="scientific">Diaporthe leptostromiformis</name>
    <name type="common">Lupinosis disease fungus</name>
    <name type="synonym">Phomopsis leptostromiformis</name>
    <dbReference type="NCBI Taxonomy" id="291059"/>
    <lineage>
        <taxon>Eukaryota</taxon>
        <taxon>Fungi</taxon>
        <taxon>Dikarya</taxon>
        <taxon>Ascomycota</taxon>
        <taxon>Pezizomycotina</taxon>
        <taxon>Sordariomycetes</taxon>
        <taxon>Sordariomycetidae</taxon>
        <taxon>Diaporthales</taxon>
        <taxon>Diaporthaceae</taxon>
        <taxon>Diaporthe</taxon>
    </lineage>
</organism>
<protein>
    <recommendedName>
        <fullName evidence="2">Ribosomally synthesized cyclic peptide phomopsin precursor phomA</fullName>
    </recommendedName>
    <alternativeName>
        <fullName evidence="2">Phomopsin biosynthesis cluster protein A</fullName>
    </alternativeName>
    <component>
        <recommendedName>
            <fullName evidence="2">YVIPID-I</fullName>
        </recommendedName>
    </component>
    <component>
        <recommendedName>
            <fullName evidence="2">YVIPID-II</fullName>
        </recommendedName>
    </component>
    <component>
        <recommendedName>
            <fullName evidence="2">YVIPID-III</fullName>
        </recommendedName>
    </component>
    <component>
        <recommendedName>
            <fullName evidence="2">YVIPID-IV</fullName>
        </recommendedName>
    </component>
    <component>
        <recommendedName>
            <fullName evidence="2">YVIPID-V</fullName>
        </recommendedName>
    </component>
    <component>
        <recommendedName>
            <fullName evidence="2">YVIPID-VI</fullName>
        </recommendedName>
    </component>
    <component>
        <recommendedName>
            <fullName evidence="2">YVIPID-VII</fullName>
        </recommendedName>
    </component>
    <component>
        <recommendedName>
            <fullName evidence="2">YVIPID-VIII</fullName>
        </recommendedName>
    </component>
    <component>
        <recommendedName>
            <fullName evidence="2">YVIPID-IX</fullName>
        </recommendedName>
    </component>
    <component>
        <recommendedName>
            <fullName evidence="2">YVIPID-X</fullName>
        </recommendedName>
    </component>
</protein>